<comment type="function">
    <text evidence="5 6 10">Key component of the super elongation complex (SEC), a complex required to increase the catalytic rate of RNA polymerase II transcription by suppressing transient pausing by the polymerase at multiple sites along the DNA. In the SEC complex, AFF4 acts as a central scaffold that recruits other factors through direct interactions with ELL proteins (ELL, ELL2 or ELL3) and the P-TEFb complex. In case of infection by HIV-1 virus, the SEC complex is recruited by the viral Tat protein to stimulate viral gene expression.</text>
</comment>
<comment type="subunit">
    <text evidence="1 4 5 6 8 9 12">Component of the super elongation complex (SEC), at least composed of EAF1, EAF2, CDK9, MLLT3/AF9, AFF (AFF1 or AFF4), the P-TEFb complex and ELL (ELL, ELL2 or ELL3) (PubMed:12065898, PubMed:20159561, PubMed:20471948, PubMed:22195968, PubMed:22483617, PubMed:30134174). Interacts with ELL3; the interaction is direct (By similarity). Interacts with ELL2; the interaction is direct and leads to stabilize ELL2 and prevent ELL2 ubiquitination and degradation (PubMed:22483617).</text>
</comment>
<comment type="interaction">
    <interactant intactId="EBI-395282">
        <id>Q9UHB7</id>
    </interactant>
    <interactant intactId="EBI-432924">
        <id>P63010</id>
        <label>AP2B1</label>
    </interactant>
    <organismsDiffer>false</organismsDiffer>
    <experiments>3</experiments>
</comment>
<comment type="interaction">
    <interactant intactId="EBI-395282">
        <id>Q9UHB7</id>
    </interactant>
    <interactant intactId="EBI-2479671">
        <id>O60563</id>
        <label>CCNT1</label>
    </interactant>
    <organismsDiffer>false</organismsDiffer>
    <experiments>8</experiments>
</comment>
<comment type="interaction">
    <interactant intactId="EBI-395282">
        <id>Q9UHB7</id>
    </interactant>
    <interactant intactId="EBI-618309">
        <id>Q08379</id>
        <label>GOLGA2</label>
    </interactant>
    <organismsDiffer>false</organismsDiffer>
    <experiments>3</experiments>
</comment>
<comment type="interaction">
    <interactant intactId="EBI-395282">
        <id>Q9UHB7</id>
    </interactant>
    <interactant intactId="EBI-1384215">
        <id>Q03111</id>
        <label>MLLT1</label>
    </interactant>
    <organismsDiffer>false</organismsDiffer>
    <experiments>11</experiments>
</comment>
<comment type="interaction">
    <interactant intactId="EBI-395282">
        <id>Q9UHB7</id>
    </interactant>
    <interactant intactId="EBI-716132">
        <id>P42568</id>
        <label>MLLT3</label>
    </interactant>
    <organismsDiffer>false</organismsDiffer>
    <experiments>4</experiments>
</comment>
<comment type="interaction">
    <interactant intactId="EBI-395282">
        <id>Q9UHB7</id>
    </interactant>
    <interactant intactId="EBI-742948">
        <id>Q5JR59</id>
        <label>MTUS2</label>
    </interactant>
    <organismsDiffer>false</organismsDiffer>
    <experiments>3</experiments>
</comment>
<comment type="interaction">
    <interactant intactId="EBI-395282">
        <id>Q9UHB7</id>
    </interactant>
    <interactant intactId="EBI-747107">
        <id>Q8IUQ4</id>
        <label>SIAH1</label>
    </interactant>
    <organismsDiffer>false</organismsDiffer>
    <experiments>5</experiments>
</comment>
<comment type="interaction">
    <interactant intactId="EBI-395282">
        <id>Q9UHB7</id>
    </interactant>
    <interactant intactId="EBI-355744">
        <id>Q12933</id>
        <label>TRAF2</label>
    </interactant>
    <organismsDiffer>false</organismsDiffer>
    <experiments>3</experiments>
</comment>
<comment type="interaction">
    <interactant intactId="EBI-395282">
        <id>Q9UHB7</id>
    </interactant>
    <interactant intactId="EBI-6164389">
        <id>P04608</id>
        <label>tat</label>
    </interactant>
    <organismsDiffer>true</organismsDiffer>
    <experiments>4</experiments>
</comment>
<comment type="interaction">
    <interactant intactId="EBI-10261324">
        <id>Q9UHB7-2</id>
    </interactant>
    <interactant intactId="EBI-432924">
        <id>P63010</id>
        <label>AP2B1</label>
    </interactant>
    <organismsDiffer>false</organismsDiffer>
    <experiments>3</experiments>
</comment>
<comment type="interaction">
    <interactant intactId="EBI-10261324">
        <id>Q9UHB7-2</id>
    </interactant>
    <interactant intactId="EBI-618309">
        <id>Q08379</id>
        <label>GOLGA2</label>
    </interactant>
    <organismsDiffer>false</organismsDiffer>
    <experiments>3</experiments>
</comment>
<comment type="interaction">
    <interactant intactId="EBI-10261324">
        <id>Q9UHB7-2</id>
    </interactant>
    <interactant intactId="EBI-742948">
        <id>Q5JR59</id>
        <label>MTUS2</label>
    </interactant>
    <organismsDiffer>false</organismsDiffer>
    <experiments>3</experiments>
</comment>
<comment type="interaction">
    <interactant intactId="EBI-10261324">
        <id>Q9UHB7-2</id>
    </interactant>
    <interactant intactId="EBI-747107">
        <id>Q8IUQ4</id>
        <label>SIAH1</label>
    </interactant>
    <organismsDiffer>false</organismsDiffer>
    <experiments>5</experiments>
</comment>
<comment type="interaction">
    <interactant intactId="EBI-10261324">
        <id>Q9UHB7-2</id>
    </interactant>
    <interactant intactId="EBI-355744">
        <id>Q12933</id>
        <label>TRAF2</label>
    </interactant>
    <organismsDiffer>false</organismsDiffer>
    <experiments>3</experiments>
</comment>
<comment type="subcellular location">
    <subcellularLocation>
        <location evidence="4">Nucleus</location>
    </subcellularLocation>
    <subcellularLocation>
        <location evidence="4">Chromosome</location>
    </subcellularLocation>
    <text evidence="1">Associates to transcriptionally active chromatin but not at snRNA genes.</text>
</comment>
<comment type="alternative products">
    <event type="alternative splicing"/>
    <isoform>
        <id>Q9UHB7-1</id>
        <name>1</name>
        <sequence type="displayed"/>
    </isoform>
    <isoform>
        <id>Q9UHB7-2</id>
        <name>2</name>
        <sequence type="described" ref="VSP_019220 VSP_019221"/>
    </isoform>
    <isoform>
        <id>Q9UHB7-3</id>
        <name>3</name>
        <sequence type="described" ref="VSP_019218 VSP_019219"/>
    </isoform>
</comment>
<comment type="tissue specificity">
    <text evidence="3 4">Ubiquitously expressed. Strongly expressed in heart, placenta, skeletal muscle, pancreas and to a lower extent in brain.</text>
</comment>
<comment type="developmental stage">
    <text evidence="3">Expressed in fetal heart, lung, brain and to a lower extent liver.</text>
</comment>
<comment type="PTM">
    <text evidence="13">Dephosphorylated at Ser-549 by the PNUTS-PP1 complex, promoting RNA polymerase II transcription pause-release.</text>
</comment>
<comment type="disease">
    <text>A chromosomal aberration involving AFF4 is found in acute lymphoblastic leukemia (ALL). Insertion ins(5;11)(q31;q13q23) that forms a KMT2A/MLL1-AFF4 fusion protein.</text>
</comment>
<comment type="disease" evidence="11">
    <disease id="DI-04427">
        <name>CHOPS syndrome</name>
        <acronym>CHOPS</acronym>
        <description>A syndrome characterized by cognitive impairment, coarse facies, heart defects, obesity, pulmonary involvement, short stature, and skeletal dysplasia.</description>
        <dbReference type="MIM" id="616368"/>
    </disease>
    <text>The disease is caused by variants affecting the gene represented in this entry.</text>
</comment>
<comment type="similarity">
    <text evidence="17">Belongs to the AF4 family.</text>
</comment>
<comment type="sequence caution" evidence="17">
    <conflict type="miscellaneous discrepancy">
        <sequence resource="EMBL-CDS" id="AAI00288"/>
    </conflict>
    <text>Contaminating sequence. Potential poly-A sequence.</text>
</comment>
<comment type="sequence caution" evidence="17">
    <conflict type="erroneous initiation">
        <sequence resource="EMBL-CDS" id="BAD92784"/>
    </conflict>
</comment>
<comment type="online information" name="Atlas of Genetics and Cytogenetics in Oncology and Haematology">
    <link uri="https://atlasgeneticsoncology.org/gene/230/aff4"/>
</comment>
<accession>Q9UHB7</accession>
<accession>B2RP19</accession>
<accession>B7WPD2</accession>
<accession>Q498B2</accession>
<accession>Q59FB3</accession>
<accession>Q6P592</accession>
<accession>Q8TDR1</accession>
<accession>Q9P0E4</accession>
<evidence type="ECO:0000250" key="1">
    <source>
        <dbReference type="UniProtKB" id="Q9ESC8"/>
    </source>
</evidence>
<evidence type="ECO:0000256" key="2">
    <source>
        <dbReference type="SAM" id="MobiDB-lite"/>
    </source>
</evidence>
<evidence type="ECO:0000269" key="3">
    <source>
    </source>
</evidence>
<evidence type="ECO:0000269" key="4">
    <source>
    </source>
</evidence>
<evidence type="ECO:0000269" key="5">
    <source>
    </source>
</evidence>
<evidence type="ECO:0000269" key="6">
    <source>
    </source>
</evidence>
<evidence type="ECO:0000269" key="7">
    <source>
    </source>
</evidence>
<evidence type="ECO:0000269" key="8">
    <source>
    </source>
</evidence>
<evidence type="ECO:0000269" key="9">
    <source>
    </source>
</evidence>
<evidence type="ECO:0000269" key="10">
    <source>
    </source>
</evidence>
<evidence type="ECO:0000269" key="11">
    <source>
    </source>
</evidence>
<evidence type="ECO:0000269" key="12">
    <source>
    </source>
</evidence>
<evidence type="ECO:0000269" key="13">
    <source>
    </source>
</evidence>
<evidence type="ECO:0000303" key="14">
    <source>
    </source>
</evidence>
<evidence type="ECO:0000303" key="15">
    <source>
    </source>
</evidence>
<evidence type="ECO:0000303" key="16">
    <source ref="3"/>
</evidence>
<evidence type="ECO:0000305" key="17"/>
<evidence type="ECO:0007744" key="18">
    <source>
    </source>
</evidence>
<evidence type="ECO:0007744" key="19">
    <source>
    </source>
</evidence>
<evidence type="ECO:0007744" key="20">
    <source>
    </source>
</evidence>
<evidence type="ECO:0007744" key="21">
    <source>
    </source>
</evidence>
<evidence type="ECO:0007744" key="22">
    <source>
    </source>
</evidence>
<evidence type="ECO:0007744" key="23">
    <source>
    </source>
</evidence>
<evidence type="ECO:0007744" key="24">
    <source>
    </source>
</evidence>
<evidence type="ECO:0007744" key="25">
    <source>
    </source>
</evidence>
<evidence type="ECO:0007744" key="26">
    <source>
    </source>
</evidence>
<evidence type="ECO:0007744" key="27">
    <source>
    </source>
</evidence>
<evidence type="ECO:0007829" key="28">
    <source>
        <dbReference type="PDB" id="4IMY"/>
    </source>
</evidence>
<evidence type="ECO:0007829" key="29">
    <source>
        <dbReference type="PDB" id="4OR5"/>
    </source>
</evidence>
<evidence type="ECO:0007829" key="30">
    <source>
        <dbReference type="PDB" id="5JW9"/>
    </source>
</evidence>
<evidence type="ECO:0007829" key="31">
    <source>
        <dbReference type="PDB" id="6KN5"/>
    </source>
</evidence>
<gene>
    <name type="primary">AFF4</name>
    <name type="synonym">AF5Q31</name>
    <name type="synonym">MCEF</name>
    <name type="ORF">HSPC092</name>
</gene>
<dbReference type="EMBL" id="AF197927">
    <property type="protein sequence ID" value="AAF18981.1"/>
    <property type="molecule type" value="mRNA"/>
</dbReference>
<dbReference type="EMBL" id="AF213987">
    <property type="protein sequence ID" value="AAM00184.2"/>
    <property type="molecule type" value="mRNA"/>
</dbReference>
<dbReference type="EMBL" id="AB209547">
    <property type="protein sequence ID" value="BAD92784.1"/>
    <property type="status" value="ALT_INIT"/>
    <property type="molecule type" value="mRNA"/>
</dbReference>
<dbReference type="EMBL" id="AC004500">
    <property type="status" value="NOT_ANNOTATED_CDS"/>
    <property type="molecule type" value="Genomic_DNA"/>
</dbReference>
<dbReference type="EMBL" id="CH471062">
    <property type="protein sequence ID" value="EAW62305.1"/>
    <property type="molecule type" value="Genomic_DNA"/>
</dbReference>
<dbReference type="EMBL" id="BC063007">
    <property type="protein sequence ID" value="AAH63007.1"/>
    <property type="molecule type" value="mRNA"/>
</dbReference>
<dbReference type="EMBL" id="BC100287">
    <property type="protein sequence ID" value="AAI00288.1"/>
    <property type="status" value="ALT_SEQ"/>
    <property type="molecule type" value="mRNA"/>
</dbReference>
<dbReference type="EMBL" id="BC137226">
    <property type="protein sequence ID" value="AAI37227.1"/>
    <property type="molecule type" value="mRNA"/>
</dbReference>
<dbReference type="EMBL" id="AF161355">
    <property type="protein sequence ID" value="AAF28915.1"/>
    <property type="molecule type" value="mRNA"/>
</dbReference>
<dbReference type="CCDS" id="CCDS4164.1">
    <molecule id="Q9UHB7-1"/>
</dbReference>
<dbReference type="RefSeq" id="NP_055238.1">
    <molecule id="Q9UHB7-1"/>
    <property type="nucleotide sequence ID" value="NM_014423.4"/>
</dbReference>
<dbReference type="RefSeq" id="XP_005272020.1">
    <molecule id="Q9UHB7-1"/>
    <property type="nucleotide sequence ID" value="XM_005271963.6"/>
</dbReference>
<dbReference type="RefSeq" id="XP_054208359.1">
    <molecule id="Q9UHB7-1"/>
    <property type="nucleotide sequence ID" value="XM_054352384.1"/>
</dbReference>
<dbReference type="PDB" id="4IMY">
    <property type="method" value="X-ray"/>
    <property type="resolution" value="2.94 A"/>
    <property type="chains" value="G/H/I=2-73"/>
</dbReference>
<dbReference type="PDB" id="4OGR">
    <property type="method" value="X-ray"/>
    <property type="resolution" value="3.00 A"/>
    <property type="chains" value="C/G/L=2-73"/>
</dbReference>
<dbReference type="PDB" id="4OR5">
    <property type="method" value="X-ray"/>
    <property type="resolution" value="2.90 A"/>
    <property type="chains" value="E/J=32-69"/>
</dbReference>
<dbReference type="PDB" id="5JW9">
    <property type="method" value="X-ray"/>
    <property type="resolution" value="2.00 A"/>
    <property type="chains" value="A=301-351"/>
</dbReference>
<dbReference type="PDB" id="5L1Z">
    <property type="method" value="X-ray"/>
    <property type="resolution" value="5.90 A"/>
    <property type="chains" value="C=32-67"/>
</dbReference>
<dbReference type="PDB" id="6CYT">
    <property type="method" value="X-ray"/>
    <property type="resolution" value="3.50 A"/>
    <property type="chains" value="C=32-67"/>
</dbReference>
<dbReference type="PDB" id="6K7P">
    <property type="method" value="X-ray"/>
    <property type="resolution" value="2.40 A"/>
    <property type="chains" value="A=902-1163"/>
</dbReference>
<dbReference type="PDB" id="6KN5">
    <property type="method" value="X-ray"/>
    <property type="resolution" value="2.20 A"/>
    <property type="chains" value="A=899-1163"/>
</dbReference>
<dbReference type="PDB" id="6R80">
    <property type="method" value="X-ray"/>
    <property type="resolution" value="2.20 A"/>
    <property type="chains" value="A=899-1163"/>
</dbReference>
<dbReference type="PDBsum" id="4IMY"/>
<dbReference type="PDBsum" id="4OGR"/>
<dbReference type="PDBsum" id="4OR5"/>
<dbReference type="PDBsum" id="5JW9"/>
<dbReference type="PDBsum" id="5L1Z"/>
<dbReference type="PDBsum" id="6CYT"/>
<dbReference type="PDBsum" id="6K7P"/>
<dbReference type="PDBsum" id="6KN5"/>
<dbReference type="PDBsum" id="6R80"/>
<dbReference type="SMR" id="Q9UHB7"/>
<dbReference type="BioGRID" id="118016">
    <property type="interactions" value="121"/>
</dbReference>
<dbReference type="CORUM" id="Q9UHB7"/>
<dbReference type="ELM" id="Q9UHB7"/>
<dbReference type="FunCoup" id="Q9UHB7">
    <property type="interactions" value="2814"/>
</dbReference>
<dbReference type="IntAct" id="Q9UHB7">
    <property type="interactions" value="73"/>
</dbReference>
<dbReference type="MINT" id="Q9UHB7"/>
<dbReference type="STRING" id="9606.ENSP00000265343"/>
<dbReference type="GlyCosmos" id="Q9UHB7">
    <property type="glycosylation" value="4 sites, 1 glycan"/>
</dbReference>
<dbReference type="GlyGen" id="Q9UHB7">
    <property type="glycosylation" value="10 sites, 1 O-linked glycan (9 sites)"/>
</dbReference>
<dbReference type="iPTMnet" id="Q9UHB7"/>
<dbReference type="PhosphoSitePlus" id="Q9UHB7"/>
<dbReference type="BioMuta" id="AFF4"/>
<dbReference type="DMDM" id="74720814"/>
<dbReference type="jPOST" id="Q9UHB7"/>
<dbReference type="MassIVE" id="Q9UHB7"/>
<dbReference type="PaxDb" id="9606-ENSP00000265343"/>
<dbReference type="PeptideAtlas" id="Q9UHB7"/>
<dbReference type="ProteomicsDB" id="84300">
    <molecule id="Q9UHB7-1"/>
</dbReference>
<dbReference type="ProteomicsDB" id="84301">
    <molecule id="Q9UHB7-2"/>
</dbReference>
<dbReference type="ProteomicsDB" id="84302">
    <molecule id="Q9UHB7-3"/>
</dbReference>
<dbReference type="Pumba" id="Q9UHB7"/>
<dbReference type="Antibodypedia" id="14555">
    <property type="antibodies" value="257 antibodies from 31 providers"/>
</dbReference>
<dbReference type="DNASU" id="27125"/>
<dbReference type="Ensembl" id="ENST00000265343.10">
    <molecule id="Q9UHB7-1"/>
    <property type="protein sequence ID" value="ENSP00000265343.5"/>
    <property type="gene ID" value="ENSG00000072364.13"/>
</dbReference>
<dbReference type="Ensembl" id="ENST00000378595.7">
    <molecule id="Q9UHB7-2"/>
    <property type="protein sequence ID" value="ENSP00000367858.3"/>
    <property type="gene ID" value="ENSG00000072364.13"/>
</dbReference>
<dbReference type="GeneID" id="27125"/>
<dbReference type="KEGG" id="hsa:27125"/>
<dbReference type="MANE-Select" id="ENST00000265343.10">
    <property type="protein sequence ID" value="ENSP00000265343.5"/>
    <property type="RefSeq nucleotide sequence ID" value="NM_014423.4"/>
    <property type="RefSeq protein sequence ID" value="NP_055238.1"/>
</dbReference>
<dbReference type="UCSC" id="uc003kyd.4">
    <molecule id="Q9UHB7-1"/>
    <property type="organism name" value="human"/>
</dbReference>
<dbReference type="AGR" id="HGNC:17869"/>
<dbReference type="CTD" id="27125"/>
<dbReference type="DisGeNET" id="27125"/>
<dbReference type="GeneCards" id="AFF4"/>
<dbReference type="HGNC" id="HGNC:17869">
    <property type="gene designation" value="AFF4"/>
</dbReference>
<dbReference type="HPA" id="ENSG00000072364">
    <property type="expression patterns" value="Low tissue specificity"/>
</dbReference>
<dbReference type="MalaCards" id="AFF4"/>
<dbReference type="MIM" id="604417">
    <property type="type" value="gene"/>
</dbReference>
<dbReference type="MIM" id="616368">
    <property type="type" value="phenotype"/>
</dbReference>
<dbReference type="neXtProt" id="NX_Q9UHB7"/>
<dbReference type="OpenTargets" id="ENSG00000072364"/>
<dbReference type="Orphanet" id="444077">
    <property type="disease" value="Cognitive impairment-coarse facies-heart defects-obesity-pulmonary involvement-short stature-skeletal dysplasia syndrome"/>
</dbReference>
<dbReference type="PharmGKB" id="PA142672641"/>
<dbReference type="VEuPathDB" id="HostDB:ENSG00000072364"/>
<dbReference type="eggNOG" id="ENOG502QR32">
    <property type="taxonomic scope" value="Eukaryota"/>
</dbReference>
<dbReference type="GeneTree" id="ENSGT00950000182974"/>
<dbReference type="HOGENOM" id="CLU_006484_0_0_1"/>
<dbReference type="InParanoid" id="Q9UHB7"/>
<dbReference type="OMA" id="HTREPQK"/>
<dbReference type="OrthoDB" id="6382204at2759"/>
<dbReference type="PAN-GO" id="Q9UHB7">
    <property type="GO annotations" value="2 GO annotations based on evolutionary models"/>
</dbReference>
<dbReference type="PhylomeDB" id="Q9UHB7"/>
<dbReference type="TreeFam" id="TF326216"/>
<dbReference type="PathwayCommons" id="Q9UHB7"/>
<dbReference type="Reactome" id="R-HSA-112382">
    <property type="pathway name" value="Formation of RNA Pol II elongation complex"/>
</dbReference>
<dbReference type="Reactome" id="R-HSA-674695">
    <property type="pathway name" value="RNA Polymerase II Pre-transcription Events"/>
</dbReference>
<dbReference type="Reactome" id="R-HSA-75955">
    <property type="pathway name" value="RNA Polymerase II Transcription Elongation"/>
</dbReference>
<dbReference type="SignaLink" id="Q9UHB7"/>
<dbReference type="SIGNOR" id="Q9UHB7"/>
<dbReference type="BioGRID-ORCS" id="27125">
    <property type="hits" value="29 hits in 1174 CRISPR screens"/>
</dbReference>
<dbReference type="ChiTaRS" id="AFF4">
    <property type="organism name" value="human"/>
</dbReference>
<dbReference type="EvolutionaryTrace" id="Q9UHB7"/>
<dbReference type="GenomeRNAi" id="27125"/>
<dbReference type="Pharos" id="Q9UHB7">
    <property type="development level" value="Tbio"/>
</dbReference>
<dbReference type="PRO" id="PR:Q9UHB7"/>
<dbReference type="Proteomes" id="UP000005640">
    <property type="component" value="Chromosome 5"/>
</dbReference>
<dbReference type="RNAct" id="Q9UHB7">
    <property type="molecule type" value="protein"/>
</dbReference>
<dbReference type="Bgee" id="ENSG00000072364">
    <property type="expression patterns" value="Expressed in esophagus squamous epithelium and 190 other cell types or tissues"/>
</dbReference>
<dbReference type="ExpressionAtlas" id="Q9UHB7">
    <property type="expression patterns" value="baseline and differential"/>
</dbReference>
<dbReference type="GO" id="GO:0000791">
    <property type="term" value="C:euchromatin"/>
    <property type="evidence" value="ECO:0000250"/>
    <property type="project" value="UniProtKB"/>
</dbReference>
<dbReference type="GO" id="GO:0001650">
    <property type="term" value="C:fibrillar center"/>
    <property type="evidence" value="ECO:0000314"/>
    <property type="project" value="HPA"/>
</dbReference>
<dbReference type="GO" id="GO:0016604">
    <property type="term" value="C:nuclear body"/>
    <property type="evidence" value="ECO:0000314"/>
    <property type="project" value="HPA"/>
</dbReference>
<dbReference type="GO" id="GO:0005654">
    <property type="term" value="C:nucleoplasm"/>
    <property type="evidence" value="ECO:0000314"/>
    <property type="project" value="HPA"/>
</dbReference>
<dbReference type="GO" id="GO:0032783">
    <property type="term" value="C:super elongation complex"/>
    <property type="evidence" value="ECO:0000318"/>
    <property type="project" value="GO_Central"/>
</dbReference>
<dbReference type="GO" id="GO:0008023">
    <property type="term" value="C:transcription elongation factor complex"/>
    <property type="evidence" value="ECO:0000314"/>
    <property type="project" value="UniProtKB"/>
</dbReference>
<dbReference type="GO" id="GO:0010468">
    <property type="term" value="P:regulation of gene expression"/>
    <property type="evidence" value="ECO:0000318"/>
    <property type="project" value="GO_Central"/>
</dbReference>
<dbReference type="GO" id="GO:0034976">
    <property type="term" value="P:response to endoplasmic reticulum stress"/>
    <property type="evidence" value="ECO:0007669"/>
    <property type="project" value="Ensembl"/>
</dbReference>
<dbReference type="GO" id="GO:0007286">
    <property type="term" value="P:spermatid development"/>
    <property type="evidence" value="ECO:0007669"/>
    <property type="project" value="Ensembl"/>
</dbReference>
<dbReference type="DisProt" id="DP01463"/>
<dbReference type="Gene3D" id="6.10.250.2670">
    <property type="match status" value="1"/>
</dbReference>
<dbReference type="InterPro" id="IPR007797">
    <property type="entry name" value="AF4/FMR2"/>
</dbReference>
<dbReference type="InterPro" id="IPR043640">
    <property type="entry name" value="AF4/FMR2_CHD"/>
</dbReference>
<dbReference type="InterPro" id="IPR043639">
    <property type="entry name" value="AF4_int"/>
</dbReference>
<dbReference type="PANTHER" id="PTHR10528">
    <property type="entry name" value="AF4/FMR2 FAMILY MEMBER"/>
    <property type="match status" value="1"/>
</dbReference>
<dbReference type="PANTHER" id="PTHR10528:SF15">
    <property type="entry name" value="AF4_FMR2 FAMILY MEMBER 4"/>
    <property type="match status" value="1"/>
</dbReference>
<dbReference type="Pfam" id="PF05110">
    <property type="entry name" value="AF-4"/>
    <property type="match status" value="1"/>
</dbReference>
<dbReference type="Pfam" id="PF18875">
    <property type="entry name" value="AF4_int"/>
    <property type="match status" value="1"/>
</dbReference>
<dbReference type="Pfam" id="PF18876">
    <property type="entry name" value="AFF4_CHD"/>
    <property type="match status" value="1"/>
</dbReference>
<proteinExistence type="evidence at protein level"/>
<protein>
    <recommendedName>
        <fullName>AF4/FMR2 family member 4</fullName>
    </recommendedName>
    <alternativeName>
        <fullName>ALL1-fused gene from chromosome 5q31 protein</fullName>
        <shortName>Protein AF-5q31</shortName>
    </alternativeName>
    <alternativeName>
        <fullName>Major CDK9 elongation factor-associated protein</fullName>
    </alternativeName>
</protein>
<feature type="chain" id="PRO_0000239393" description="AF4/FMR2 family member 4">
    <location>
        <begin position="1"/>
        <end position="1163"/>
    </location>
</feature>
<feature type="region of interest" description="Disordered" evidence="2">
    <location>
        <begin position="1"/>
        <end position="48"/>
    </location>
</feature>
<feature type="region of interest" description="Disordered" evidence="2">
    <location>
        <begin position="76"/>
        <end position="312"/>
    </location>
</feature>
<feature type="region of interest" description="Disordered" evidence="2">
    <location>
        <begin position="324"/>
        <end position="904"/>
    </location>
</feature>
<feature type="region of interest" description="Disordered" evidence="2">
    <location>
        <begin position="1034"/>
        <end position="1073"/>
    </location>
</feature>
<feature type="compositionally biased region" description="Basic and acidic residues" evidence="2">
    <location>
        <begin position="1"/>
        <end position="19"/>
    </location>
</feature>
<feature type="compositionally biased region" description="Polar residues" evidence="2">
    <location>
        <begin position="115"/>
        <end position="128"/>
    </location>
</feature>
<feature type="compositionally biased region" description="Low complexity" evidence="2">
    <location>
        <begin position="129"/>
        <end position="148"/>
    </location>
</feature>
<feature type="compositionally biased region" description="Low complexity" evidence="2">
    <location>
        <begin position="177"/>
        <end position="194"/>
    </location>
</feature>
<feature type="compositionally biased region" description="Basic and acidic residues" evidence="2">
    <location>
        <begin position="198"/>
        <end position="217"/>
    </location>
</feature>
<feature type="compositionally biased region" description="Polar residues" evidence="2">
    <location>
        <begin position="227"/>
        <end position="251"/>
    </location>
</feature>
<feature type="compositionally biased region" description="Polar residues" evidence="2">
    <location>
        <begin position="273"/>
        <end position="285"/>
    </location>
</feature>
<feature type="compositionally biased region" description="Polar residues" evidence="2">
    <location>
        <begin position="350"/>
        <end position="375"/>
    </location>
</feature>
<feature type="compositionally biased region" description="Polar residues" evidence="2">
    <location>
        <begin position="403"/>
        <end position="412"/>
    </location>
</feature>
<feature type="compositionally biased region" description="Basic and acidic residues" evidence="2">
    <location>
        <begin position="413"/>
        <end position="429"/>
    </location>
</feature>
<feature type="compositionally biased region" description="Low complexity" evidence="2">
    <location>
        <begin position="430"/>
        <end position="462"/>
    </location>
</feature>
<feature type="compositionally biased region" description="Polar residues" evidence="2">
    <location>
        <begin position="488"/>
        <end position="501"/>
    </location>
</feature>
<feature type="compositionally biased region" description="Polar residues" evidence="2">
    <location>
        <begin position="510"/>
        <end position="528"/>
    </location>
</feature>
<feature type="compositionally biased region" description="Polar residues" evidence="2">
    <location>
        <begin position="549"/>
        <end position="560"/>
    </location>
</feature>
<feature type="compositionally biased region" description="Basic and acidic residues" evidence="2">
    <location>
        <begin position="568"/>
        <end position="586"/>
    </location>
</feature>
<feature type="compositionally biased region" description="Basic residues" evidence="2">
    <location>
        <begin position="599"/>
        <end position="612"/>
    </location>
</feature>
<feature type="compositionally biased region" description="Basic and acidic residues" evidence="2">
    <location>
        <begin position="613"/>
        <end position="627"/>
    </location>
</feature>
<feature type="compositionally biased region" description="Basic and acidic residues" evidence="2">
    <location>
        <begin position="730"/>
        <end position="761"/>
    </location>
</feature>
<feature type="compositionally biased region" description="Basic and acidic residues" evidence="2">
    <location>
        <begin position="769"/>
        <end position="789"/>
    </location>
</feature>
<feature type="compositionally biased region" description="Basic and acidic residues" evidence="2">
    <location>
        <begin position="799"/>
        <end position="811"/>
    </location>
</feature>
<feature type="compositionally biased region" description="Low complexity" evidence="2">
    <location>
        <begin position="836"/>
        <end position="862"/>
    </location>
</feature>
<feature type="compositionally biased region" description="Low complexity" evidence="2">
    <location>
        <begin position="1062"/>
        <end position="1073"/>
    </location>
</feature>
<feature type="site" description="Breakpoint for insertion to form KMT2A/MLL1-AFF4 fusion protein">
    <location>
        <begin position="350"/>
        <end position="351"/>
    </location>
</feature>
<feature type="modified residue" description="Phosphoserine" evidence="25">
    <location>
        <position position="120"/>
    </location>
</feature>
<feature type="modified residue" description="Phosphoserine" evidence="25">
    <location>
        <position position="212"/>
    </location>
</feature>
<feature type="modified residue" description="Phosphoserine" evidence="20">
    <location>
        <position position="387"/>
    </location>
</feature>
<feature type="modified residue" description="Phosphoserine" evidence="20">
    <location>
        <position position="388"/>
    </location>
</feature>
<feature type="modified residue" description="Phosphoserine" evidence="20">
    <location>
        <position position="389"/>
    </location>
</feature>
<feature type="modified residue" description="Phosphoserine" evidence="20">
    <location>
        <position position="392"/>
    </location>
</feature>
<feature type="modified residue" description="Phosphoserine" evidence="25 26">
    <location>
        <position position="487"/>
    </location>
</feature>
<feature type="modified residue" description="Phosphoserine" evidence="1">
    <location>
        <position position="490"/>
    </location>
</feature>
<feature type="modified residue" description="Phosphoserine" evidence="1">
    <location>
        <position position="491"/>
    </location>
</feature>
<feature type="modified residue" description="Phosphoserine" evidence="13 21 22">
    <location>
        <position position="549"/>
    </location>
</feature>
<feature type="modified residue" description="Phosphoserine" evidence="20 22">
    <location>
        <position position="671"/>
    </location>
</feature>
<feature type="modified residue" description="Phosphothreonine" evidence="19 25">
    <location>
        <position position="674"/>
    </location>
</feature>
<feature type="modified residue" description="Phosphoserine" evidence="25">
    <location>
        <position position="680"/>
    </location>
</feature>
<feature type="modified residue" description="Phosphoserine" evidence="20">
    <location>
        <position position="694"/>
    </location>
</feature>
<feature type="modified residue" description="Phosphoserine" evidence="18 20 25">
    <location>
        <position position="703"/>
    </location>
</feature>
<feature type="modified residue" description="Phosphoserine" evidence="18 20 25 26">
    <location>
        <position position="706"/>
    </location>
</feature>
<feature type="modified residue" description="Phosphotyrosine" evidence="20">
    <location>
        <position position="712"/>
    </location>
</feature>
<feature type="modified residue" description="Phosphoserine" evidence="21 24 25">
    <location>
        <position position="814"/>
    </location>
</feature>
<feature type="modified residue" description="N6-acetyllysine" evidence="1">
    <location>
        <position position="822"/>
    </location>
</feature>
<feature type="modified residue" description="Phosphoserine" evidence="24 25">
    <location>
        <position position="836"/>
    </location>
</feature>
<feature type="modified residue" description="Phosphoserine" evidence="20 21 22 24 25">
    <location>
        <position position="1043"/>
    </location>
</feature>
<feature type="modified residue" description="Phosphoserine" evidence="20 21">
    <location>
        <position position="1055"/>
    </location>
</feature>
<feature type="modified residue" description="Phosphoserine" evidence="20 22 23 25">
    <location>
        <position position="1058"/>
    </location>
</feature>
<feature type="modified residue" description="Phosphoserine" evidence="20">
    <location>
        <position position="1062"/>
    </location>
</feature>
<feature type="cross-link" description="Glycyl lysine isopeptide (Lys-Gly) (interchain with G-Cter in SUMO2)" evidence="27">
    <location>
        <position position="583"/>
    </location>
</feature>
<feature type="splice variant" id="VSP_019218" description="In isoform 3." evidence="15">
    <original>ESQ</original>
    <variation>VSK</variation>
    <location>
        <begin position="351"/>
        <end position="353"/>
    </location>
</feature>
<feature type="splice variant" id="VSP_019219" description="In isoform 3." evidence="15">
    <location>
        <begin position="354"/>
        <end position="1163"/>
    </location>
</feature>
<feature type="splice variant" id="VSP_019220" description="In isoform 2." evidence="14 16">
    <original>EKAPSSSSNCPPSAPTLDSSK</original>
    <variation>VKCWGPGAFENHSTCHVTFPG</variation>
    <location>
        <begin position="880"/>
        <end position="900"/>
    </location>
</feature>
<feature type="splice variant" id="VSP_019221" description="In isoform 2." evidence="14 16">
    <location>
        <begin position="901"/>
        <end position="1163"/>
    </location>
</feature>
<feature type="sequence variant" id="VAR_053003" description="In dbSNP:rs34527550.">
    <original>T</original>
    <variation>P</variation>
    <location>
        <position position="136"/>
    </location>
</feature>
<feature type="sequence variant" id="VAR_073790" description="In CHOPS; dbSNP:rs786205233." evidence="11">
    <original>T</original>
    <variation>A</variation>
    <location>
        <position position="254"/>
    </location>
</feature>
<feature type="sequence variant" id="VAR_073791" description="In CHOPS; dbSNP:rs786205679." evidence="11">
    <original>T</original>
    <variation>S</variation>
    <location>
        <position position="254"/>
    </location>
</feature>
<feature type="sequence variant" id="VAR_073792" description="In CHOPS; dbSNP:rs786205680." evidence="11">
    <original>R</original>
    <variation>W</variation>
    <location>
        <position position="258"/>
    </location>
</feature>
<feature type="sequence variant" id="VAR_064693" description="Found in a clear cell renal carcinoma case; somatic mutation." evidence="7">
    <original>S</original>
    <variation>T</variation>
    <location>
        <position position="757"/>
    </location>
</feature>
<feature type="sequence conflict" description="In Ref. 2; AAM00184." evidence="17" ref="2">
    <original>E</original>
    <variation>G</variation>
    <location>
        <position position="264"/>
    </location>
</feature>
<feature type="sequence conflict" description="In Ref. 2; AAM00184." evidence="17" ref="2">
    <original>T</original>
    <variation>I</variation>
    <location>
        <position position="359"/>
    </location>
</feature>
<feature type="sequence conflict" description="In Ref. 2; AAM00184." evidence="17" ref="2">
    <original>D</original>
    <variation>G</variation>
    <location>
        <position position="383"/>
    </location>
</feature>
<feature type="sequence conflict" description="In Ref. 2; AAM00184." evidence="17" ref="2">
    <original>E</original>
    <variation>G</variation>
    <location>
        <position position="445"/>
    </location>
</feature>
<feature type="sequence conflict" description="In Ref. 7; AAF28915." evidence="17" ref="7">
    <original>K</original>
    <variation>R</variation>
    <location>
        <position position="870"/>
    </location>
</feature>
<feature type="helix" evidence="28">
    <location>
        <begin position="4"/>
        <end position="18"/>
    </location>
</feature>
<feature type="helix" evidence="29">
    <location>
        <begin position="47"/>
        <end position="56"/>
    </location>
</feature>
<feature type="helix" evidence="29">
    <location>
        <begin position="59"/>
        <end position="62"/>
    </location>
</feature>
<feature type="turn" evidence="29">
    <location>
        <begin position="63"/>
        <end position="65"/>
    </location>
</feature>
<feature type="helix" evidence="30">
    <location>
        <begin position="315"/>
        <end position="323"/>
    </location>
</feature>
<feature type="helix" evidence="31">
    <location>
        <begin position="915"/>
        <end position="931"/>
    </location>
</feature>
<feature type="helix" evidence="31">
    <location>
        <begin position="935"/>
        <end position="958"/>
    </location>
</feature>
<feature type="helix" evidence="31">
    <location>
        <begin position="967"/>
        <end position="981"/>
    </location>
</feature>
<feature type="helix" evidence="31">
    <location>
        <begin position="993"/>
        <end position="1017"/>
    </location>
</feature>
<feature type="helix" evidence="31">
    <location>
        <begin position="1019"/>
        <end position="1032"/>
    </location>
</feature>
<feature type="helix" evidence="31">
    <location>
        <begin position="1087"/>
        <end position="1116"/>
    </location>
</feature>
<feature type="helix" evidence="31">
    <location>
        <begin position="1117"/>
        <end position="1120"/>
    </location>
</feature>
<feature type="helix" evidence="31">
    <location>
        <begin position="1121"/>
        <end position="1131"/>
    </location>
</feature>
<feature type="turn" evidence="31">
    <location>
        <begin position="1136"/>
        <end position="1138"/>
    </location>
</feature>
<feature type="helix" evidence="31">
    <location>
        <begin position="1141"/>
        <end position="1159"/>
    </location>
</feature>
<sequence>MNREDRNVLRMKERERRNQEIQQGEDAFPPSSPLFAEPYKVTSKEDKLSSRIQSMLGNYDEMKDFIGDRSIPKLVAIPKPTVPPSADEKSNPNFFEQRHGGSHQSSKWTPVGPAPSTSQSQKRSSGLQSGHSSQRTSAGSSSGTNSSGQRHDRESYNNSGSSSRKKGQHGSEHSKSRSSSPGKPQAVSSLNSSHSRSHGNDHHSKEHQRSKSPRDPDANWDSPSRVPFSSGQHSTQSFPPSLMSKSNSMLQKPTAYVRPMDGQESMEPKLSSEHYSSQSHGNSMTELKPSSKAHLTKLKIPSQPLDASASGDVSCVDEILKEMTHSWPPPLTAIHTPCKTEPSKFPFPTKESQQSNFGTGEQKRYNPSKTSNGHQSKSMLKDDLKLSSSEDSDGEQDCDKTMPRSTPGSNSEPSHHNSEGADNSRDDSSSHSGSESSSGSDSESESSSSDSEANEPSQSASPEPEPPPTNKWQLDNWLNKVNPHKVSPASSVDSNIPSSQGYKKEGREQGTGNSYTDTSGPKETSSATPGRDSKTIQKGSESGRGRQKSPAQSDSTTQRRTVGKKQPKKAEKAAAEEPRGGLKIESETPVDLASSMPSSRHKAATKGSRKPNIKKESKSSPRPTAEKKKYKSTSKSSQKSREIIETDTSSSDSDESESLPPSSQTPKYPESNRTPVKPSSVEEEDSFFRQRMFSPMEEKELLSPLSEPDDRYPLIVKIDLNLLTRIPGKPYKETEPPKGEKKNVPEKHTREAQKQASEKVSNKGKRKHKNEDDNRASESKKPKTEDKNSAGHKPSSNRESSKQSAAKEKDLLPSPAGPVPSKDPKTEHGSRKRTISQSSSLKSSSNSNKETSGSSKNSSSTSKQKKTEGKTSSSSKEVKEKAPSSSSNCPPSAPTLDSSKPRRTKLVFDDRNYSADHYLQEAKKLKHNADALSDRFEKAVYYLDAVVSFIECGNALEKNAQESKSPFPMYSETVDLIKYTMKLKNYLAPDATAADKRLTVLCLRCESLLYLRLFKLKKENALKYSKTLTEHLKNSYNNSQAPSPGLGSKAVGMPSPVSPKLSPGNSGNYSSGASSASASGSSVTIPQKIHQMAASYVQVTSNFLYATEIWDQAEQLSKEQKEFFAELDKVMGPLIFNASIMTDLVRYTRQGLHWLRQDAKLIS</sequence>
<reference key="1">
    <citation type="journal article" date="1999" name="Proc. Natl. Acad. Sci. U.S.A.">
        <title>AF5q31, a newly identified AF4-related gene, is fused to MLL in infant acute lymphoblastic leukemia with ins(5;11)(q31;q13q23).</title>
        <authorList>
            <person name="Taki T."/>
            <person name="Kano H."/>
            <person name="Taniwaki M."/>
            <person name="Sako M."/>
            <person name="Yanagisawa M."/>
            <person name="Hayashi Y."/>
        </authorList>
    </citation>
    <scope>NUCLEOTIDE SEQUENCE [MRNA] (ISOFORM 1)</scope>
    <scope>CHROMOSOMAL TRANSLOCATION WITH KMT2A/MLL1</scope>
    <scope>TISSUE SPECIFICITY</scope>
    <scope>DEVELOPMENTAL STAGE</scope>
    <source>
        <tissue>Placenta</tissue>
    </source>
</reference>
<reference key="2">
    <citation type="journal article" date="2002" name="J. Biomed. Sci.">
        <title>MCEF, the newest member of the AF4 family of transcription factors involved in leukemia, is a positive transcription elongation factor-b-associated protein.</title>
        <authorList>
            <person name="Estable M.C."/>
            <person name="Naghavi M.H."/>
            <person name="Kato H."/>
            <person name="Xiao H."/>
            <person name="Qin J."/>
            <person name="Vahlne A."/>
            <person name="Roeder R.G."/>
        </authorList>
    </citation>
    <scope>NUCLEOTIDE SEQUENCE [MRNA] (ISOFORM 1)</scope>
    <scope>PROTEIN SEQUENCE OF 111-122</scope>
    <scope>IDENTIFICATION IN P-TEFB COMPLEX</scope>
    <scope>TISSUE SPECIFICITY</scope>
    <scope>SUBCELLULAR LOCATION</scope>
    <source>
        <tissue>Fetal brain</tissue>
    </source>
</reference>
<reference key="3">
    <citation type="submission" date="2005-03" db="EMBL/GenBank/DDBJ databases">
        <authorList>
            <person name="Totoki Y."/>
            <person name="Toyoda A."/>
            <person name="Takeda T."/>
            <person name="Sakaki Y."/>
            <person name="Tanaka A."/>
            <person name="Yokoyama S."/>
            <person name="Ohara O."/>
            <person name="Nagase T."/>
            <person name="Kikuno R.F."/>
        </authorList>
    </citation>
    <scope>NUCLEOTIDE SEQUENCE [LARGE SCALE MRNA] (ISOFORM 2)</scope>
    <source>
        <tissue>Brain</tissue>
    </source>
</reference>
<reference key="4">
    <citation type="journal article" date="2004" name="Nature">
        <title>The DNA sequence and comparative analysis of human chromosome 5.</title>
        <authorList>
            <person name="Schmutz J."/>
            <person name="Martin J."/>
            <person name="Terry A."/>
            <person name="Couronne O."/>
            <person name="Grimwood J."/>
            <person name="Lowry S."/>
            <person name="Gordon L.A."/>
            <person name="Scott D."/>
            <person name="Xie G."/>
            <person name="Huang W."/>
            <person name="Hellsten U."/>
            <person name="Tran-Gyamfi M."/>
            <person name="She X."/>
            <person name="Prabhakar S."/>
            <person name="Aerts A."/>
            <person name="Altherr M."/>
            <person name="Bajorek E."/>
            <person name="Black S."/>
            <person name="Branscomb E."/>
            <person name="Caoile C."/>
            <person name="Challacombe J.F."/>
            <person name="Chan Y.M."/>
            <person name="Denys M."/>
            <person name="Detter J.C."/>
            <person name="Escobar J."/>
            <person name="Flowers D."/>
            <person name="Fotopulos D."/>
            <person name="Glavina T."/>
            <person name="Gomez M."/>
            <person name="Gonzales E."/>
            <person name="Goodstein D."/>
            <person name="Grigoriev I."/>
            <person name="Groza M."/>
            <person name="Hammon N."/>
            <person name="Hawkins T."/>
            <person name="Haydu L."/>
            <person name="Israni S."/>
            <person name="Jett J."/>
            <person name="Kadner K."/>
            <person name="Kimball H."/>
            <person name="Kobayashi A."/>
            <person name="Lopez F."/>
            <person name="Lou Y."/>
            <person name="Martinez D."/>
            <person name="Medina C."/>
            <person name="Morgan J."/>
            <person name="Nandkeshwar R."/>
            <person name="Noonan J.P."/>
            <person name="Pitluck S."/>
            <person name="Pollard M."/>
            <person name="Predki P."/>
            <person name="Priest J."/>
            <person name="Ramirez L."/>
            <person name="Retterer J."/>
            <person name="Rodriguez A."/>
            <person name="Rogers S."/>
            <person name="Salamov A."/>
            <person name="Salazar A."/>
            <person name="Thayer N."/>
            <person name="Tice H."/>
            <person name="Tsai M."/>
            <person name="Ustaszewska A."/>
            <person name="Vo N."/>
            <person name="Wheeler J."/>
            <person name="Wu K."/>
            <person name="Yang J."/>
            <person name="Dickson M."/>
            <person name="Cheng J.-F."/>
            <person name="Eichler E.E."/>
            <person name="Olsen A."/>
            <person name="Pennacchio L.A."/>
            <person name="Rokhsar D.S."/>
            <person name="Richardson P."/>
            <person name="Lucas S.M."/>
            <person name="Myers R.M."/>
            <person name="Rubin E.M."/>
        </authorList>
    </citation>
    <scope>NUCLEOTIDE SEQUENCE [LARGE SCALE GENOMIC DNA]</scope>
</reference>
<reference key="5">
    <citation type="submission" date="2005-09" db="EMBL/GenBank/DDBJ databases">
        <authorList>
            <person name="Mural R.J."/>
            <person name="Istrail S."/>
            <person name="Sutton G.G."/>
            <person name="Florea L."/>
            <person name="Halpern A.L."/>
            <person name="Mobarry C.M."/>
            <person name="Lippert R."/>
            <person name="Walenz B."/>
            <person name="Shatkay H."/>
            <person name="Dew I."/>
            <person name="Miller J.R."/>
            <person name="Flanigan M.J."/>
            <person name="Edwards N.J."/>
            <person name="Bolanos R."/>
            <person name="Fasulo D."/>
            <person name="Halldorsson B.V."/>
            <person name="Hannenhalli S."/>
            <person name="Turner R."/>
            <person name="Yooseph S."/>
            <person name="Lu F."/>
            <person name="Nusskern D.R."/>
            <person name="Shue B.C."/>
            <person name="Zheng X.H."/>
            <person name="Zhong F."/>
            <person name="Delcher A.L."/>
            <person name="Huson D.H."/>
            <person name="Kravitz S.A."/>
            <person name="Mouchard L."/>
            <person name="Reinert K."/>
            <person name="Remington K.A."/>
            <person name="Clark A.G."/>
            <person name="Waterman M.S."/>
            <person name="Eichler E.E."/>
            <person name="Adams M.D."/>
            <person name="Hunkapiller M.W."/>
            <person name="Myers E.W."/>
            <person name="Venter J.C."/>
        </authorList>
    </citation>
    <scope>NUCLEOTIDE SEQUENCE [LARGE SCALE GENOMIC DNA]</scope>
</reference>
<reference key="6">
    <citation type="journal article" date="2004" name="Genome Res.">
        <title>The status, quality, and expansion of the NIH full-length cDNA project: the Mammalian Gene Collection (MGC).</title>
        <authorList>
            <consortium name="The MGC Project Team"/>
        </authorList>
    </citation>
    <scope>NUCLEOTIDE SEQUENCE [LARGE SCALE MRNA] (ISOFORMS 1 AND 3)</scope>
    <scope>NUCLEOTIDE SEQUENCE [LARGE SCALE MRNA] OF 1-363 (ISOFORMS 1/2)</scope>
    <source>
        <tissue>Blood</tissue>
        <tissue>Brain</tissue>
        <tissue>Skin</tissue>
    </source>
</reference>
<reference key="7">
    <citation type="journal article" date="2000" name="Genome Res.">
        <title>Cloning and functional analysis of cDNAs with open reading frames for 300 previously undefined genes expressed in CD34+ hematopoietic stem/progenitor cells.</title>
        <authorList>
            <person name="Zhang Q.-H."/>
            <person name="Ye M."/>
            <person name="Wu X.-Y."/>
            <person name="Ren S.-X."/>
            <person name="Zhao M."/>
            <person name="Zhao C.-J."/>
            <person name="Fu G."/>
            <person name="Shen Y."/>
            <person name="Fan H.-Y."/>
            <person name="Lu G."/>
            <person name="Zhong M."/>
            <person name="Xu X.-R."/>
            <person name="Han Z.-G."/>
            <person name="Zhang J.-W."/>
            <person name="Tao J."/>
            <person name="Huang Q.-H."/>
            <person name="Zhou J."/>
            <person name="Hu G.-X."/>
            <person name="Gu J."/>
            <person name="Chen S.-J."/>
            <person name="Chen Z."/>
        </authorList>
    </citation>
    <scope>NUCLEOTIDE SEQUENCE [LARGE SCALE MRNA] OF 788-1163 (ISOFORM 2)</scope>
    <source>
        <tissue>Umbilical cord blood</tissue>
    </source>
</reference>
<reference key="8">
    <citation type="journal article" date="2006" name="Cell">
        <title>Global, in vivo, and site-specific phosphorylation dynamics in signaling networks.</title>
        <authorList>
            <person name="Olsen J.V."/>
            <person name="Blagoev B."/>
            <person name="Gnad F."/>
            <person name="Macek B."/>
            <person name="Kumar C."/>
            <person name="Mortensen P."/>
            <person name="Mann M."/>
        </authorList>
    </citation>
    <scope>PHOSPHORYLATION [LARGE SCALE ANALYSIS] AT SER-703 AND SER-706</scope>
    <scope>IDENTIFICATION BY MASS SPECTROMETRY [LARGE SCALE ANALYSIS]</scope>
    <source>
        <tissue>Cervix carcinoma</tissue>
    </source>
</reference>
<reference key="9">
    <citation type="journal article" date="2006" name="Nat. Biotechnol.">
        <title>A probability-based approach for high-throughput protein phosphorylation analysis and site localization.</title>
        <authorList>
            <person name="Beausoleil S.A."/>
            <person name="Villen J."/>
            <person name="Gerber S.A."/>
            <person name="Rush J."/>
            <person name="Gygi S.P."/>
        </authorList>
    </citation>
    <scope>IDENTIFICATION BY MASS SPECTROMETRY [LARGE SCALE ANALYSIS]</scope>
    <source>
        <tissue>Cervix carcinoma</tissue>
    </source>
</reference>
<reference key="10">
    <citation type="journal article" date="2007" name="Science">
        <title>ATM and ATR substrate analysis reveals extensive protein networks responsive to DNA damage.</title>
        <authorList>
            <person name="Matsuoka S."/>
            <person name="Ballif B.A."/>
            <person name="Smogorzewska A."/>
            <person name="McDonald E.R. III"/>
            <person name="Hurov K.E."/>
            <person name="Luo J."/>
            <person name="Bakalarski C.E."/>
            <person name="Zhao Z."/>
            <person name="Solimini N."/>
            <person name="Lerenthal Y."/>
            <person name="Shiloh Y."/>
            <person name="Gygi S.P."/>
            <person name="Elledge S.J."/>
        </authorList>
    </citation>
    <scope>IDENTIFICATION BY MASS SPECTROMETRY [LARGE SCALE ANALYSIS]</scope>
    <source>
        <tissue>Embryonic kidney</tissue>
    </source>
</reference>
<reference key="11">
    <citation type="journal article" date="2008" name="J. Proteome Res.">
        <title>Combining protein-based IMAC, peptide-based IMAC, and MudPIT for efficient phosphoproteomic analysis.</title>
        <authorList>
            <person name="Cantin G.T."/>
            <person name="Yi W."/>
            <person name="Lu B."/>
            <person name="Park S.K."/>
            <person name="Xu T."/>
            <person name="Lee J.-D."/>
            <person name="Yates J.R. III"/>
        </authorList>
    </citation>
    <scope>PHOSPHORYLATION [LARGE SCALE ANALYSIS] AT THR-674</scope>
    <scope>IDENTIFICATION BY MASS SPECTROMETRY [LARGE SCALE ANALYSIS]</scope>
    <source>
        <tissue>Cervix carcinoma</tissue>
    </source>
</reference>
<reference key="12">
    <citation type="journal article" date="2008" name="Mol. Cell">
        <title>Kinase-selective enrichment enables quantitative phosphoproteomics of the kinome across the cell cycle.</title>
        <authorList>
            <person name="Daub H."/>
            <person name="Olsen J.V."/>
            <person name="Bairlein M."/>
            <person name="Gnad F."/>
            <person name="Oppermann F.S."/>
            <person name="Korner R."/>
            <person name="Greff Z."/>
            <person name="Keri G."/>
            <person name="Stemmann O."/>
            <person name="Mann M."/>
        </authorList>
    </citation>
    <scope>PHOSPHORYLATION [LARGE SCALE ANALYSIS] AT SER-549; SER-814; SER-1043 AND SER-1055</scope>
    <scope>IDENTIFICATION BY MASS SPECTROMETRY [LARGE SCALE ANALYSIS]</scope>
    <source>
        <tissue>Cervix carcinoma</tissue>
    </source>
</reference>
<reference key="13">
    <citation type="journal article" date="2008" name="Proc. Natl. Acad. Sci. U.S.A.">
        <title>A quantitative atlas of mitotic phosphorylation.</title>
        <authorList>
            <person name="Dephoure N."/>
            <person name="Zhou C."/>
            <person name="Villen J."/>
            <person name="Beausoleil S.A."/>
            <person name="Bakalarski C.E."/>
            <person name="Elledge S.J."/>
            <person name="Gygi S.P."/>
        </authorList>
    </citation>
    <scope>PHOSPHORYLATION [LARGE SCALE ANALYSIS] AT SER-387; SER-388; SER-389; SER-392; SER-671; SER-694; SER-703; SER-706; TYR-712; SER-1043; SER-1055; SER-1058 AND SER-1062</scope>
    <scope>IDENTIFICATION BY MASS SPECTROMETRY [LARGE SCALE ANALYSIS]</scope>
    <source>
        <tissue>Cervix carcinoma</tissue>
    </source>
</reference>
<reference key="14">
    <citation type="journal article" date="2009" name="Anal. Chem.">
        <title>Lys-N and trypsin cover complementary parts of the phosphoproteome in a refined SCX-based approach.</title>
        <authorList>
            <person name="Gauci S."/>
            <person name="Helbig A.O."/>
            <person name="Slijper M."/>
            <person name="Krijgsveld J."/>
            <person name="Heck A.J."/>
            <person name="Mohammed S."/>
        </authorList>
    </citation>
    <scope>IDENTIFICATION BY MASS SPECTROMETRY [LARGE SCALE ANALYSIS]</scope>
</reference>
<reference key="15">
    <citation type="journal article" date="2009" name="Mol. Cell. Proteomics">
        <title>Large-scale proteomics analysis of the human kinome.</title>
        <authorList>
            <person name="Oppermann F.S."/>
            <person name="Gnad F."/>
            <person name="Olsen J.V."/>
            <person name="Hornberger R."/>
            <person name="Greff Z."/>
            <person name="Keri G."/>
            <person name="Mann M."/>
            <person name="Daub H."/>
        </authorList>
    </citation>
    <scope>PHOSPHORYLATION [LARGE SCALE ANALYSIS] AT SER-549; SER-671; SER-1043 AND SER-1058</scope>
    <scope>IDENTIFICATION BY MASS SPECTROMETRY [LARGE SCALE ANALYSIS]</scope>
</reference>
<reference key="16">
    <citation type="journal article" date="2009" name="Sci. Signal.">
        <title>Quantitative phosphoproteomic analysis of T cell receptor signaling reveals system-wide modulation of protein-protein interactions.</title>
        <authorList>
            <person name="Mayya V."/>
            <person name="Lundgren D.H."/>
            <person name="Hwang S.-I."/>
            <person name="Rezaul K."/>
            <person name="Wu L."/>
            <person name="Eng J.K."/>
            <person name="Rodionov V."/>
            <person name="Han D.K."/>
        </authorList>
    </citation>
    <scope>PHOSPHORYLATION [LARGE SCALE ANALYSIS] AT SER-1058</scope>
    <scope>IDENTIFICATION BY MASS SPECTROMETRY [LARGE SCALE ANALYSIS]</scope>
    <source>
        <tissue>Leukemic T-cell</tissue>
    </source>
</reference>
<reference key="17">
    <citation type="journal article" date="2010" name="Mol. Cell">
        <title>HIV-1 Tat and host AFF4 recruit two transcription elongation factors into a bifunctional complex for coordinated activation of HIV-1 transcription.</title>
        <authorList>
            <person name="He N."/>
            <person name="Liu M."/>
            <person name="Hsu J."/>
            <person name="Xue Y."/>
            <person name="Chou S."/>
            <person name="Burlingame A."/>
            <person name="Krogan N.J."/>
            <person name="Alber T."/>
            <person name="Zhou Q."/>
        </authorList>
    </citation>
    <scope>FUNCTION</scope>
    <scope>IDENTIFICATION IN THE SEC COMPLEX</scope>
</reference>
<reference key="18">
    <citation type="journal article" date="2010" name="Mol. Cell">
        <title>AFF4, a component of the ELL/P-TEFb elongation complex and a shared subunit of MLL chimeras, can link transcription elongation to leukemia.</title>
        <authorList>
            <person name="Lin C."/>
            <person name="Smith E.R."/>
            <person name="Takahashi H."/>
            <person name="Lai K.C."/>
            <person name="Martin-Brown S."/>
            <person name="Florens L."/>
            <person name="Washburn M.P."/>
            <person name="Conaway J.W."/>
            <person name="Conaway R.C."/>
            <person name="Shilatifard A."/>
        </authorList>
    </citation>
    <scope>FUNCTION</scope>
    <scope>IDENTIFICATION IN THE SEC COMPLEX</scope>
</reference>
<reference key="19">
    <citation type="journal article" date="2010" name="Sci. Signal.">
        <title>Quantitative phosphoproteomics reveals widespread full phosphorylation site occupancy during mitosis.</title>
        <authorList>
            <person name="Olsen J.V."/>
            <person name="Vermeulen M."/>
            <person name="Santamaria A."/>
            <person name="Kumar C."/>
            <person name="Miller M.L."/>
            <person name="Jensen L.J."/>
            <person name="Gnad F."/>
            <person name="Cox J."/>
            <person name="Jensen T.S."/>
            <person name="Nigg E.A."/>
            <person name="Brunak S."/>
            <person name="Mann M."/>
        </authorList>
    </citation>
    <scope>PHOSPHORYLATION [LARGE SCALE ANALYSIS] AT SER-814; SER-836 AND SER-1043</scope>
    <scope>IDENTIFICATION BY MASS SPECTROMETRY [LARGE SCALE ANALYSIS]</scope>
    <source>
        <tissue>Cervix carcinoma</tissue>
    </source>
</reference>
<reference key="20">
    <citation type="journal article" date="2011" name="BMC Syst. Biol.">
        <title>Initial characterization of the human central proteome.</title>
        <authorList>
            <person name="Burkard T.R."/>
            <person name="Planyavsky M."/>
            <person name="Kaupe I."/>
            <person name="Breitwieser F.P."/>
            <person name="Buerckstuemmer T."/>
            <person name="Bennett K.L."/>
            <person name="Superti-Furga G."/>
            <person name="Colinge J."/>
        </authorList>
    </citation>
    <scope>IDENTIFICATION BY MASS SPECTROMETRY [LARGE SCALE ANALYSIS]</scope>
</reference>
<reference key="21">
    <citation type="journal article" date="2011" name="Mol. Cell">
        <title>The little elongation complex regulates small nuclear RNA transcription.</title>
        <authorList>
            <person name="Smith E.R."/>
            <person name="Lin C."/>
            <person name="Garrett A.S."/>
            <person name="Thornton J."/>
            <person name="Mohaghegh N."/>
            <person name="Hu D."/>
            <person name="Jackson J."/>
            <person name="Saraf A."/>
            <person name="Swanson S.K."/>
            <person name="Seidel C."/>
            <person name="Florens L."/>
            <person name="Washburn M.P."/>
            <person name="Eissenberg J.C."/>
            <person name="Shilatifard A."/>
        </authorList>
    </citation>
    <scope>IDENTIFICATION IN THE SEC COMPLEX</scope>
</reference>
<reference key="22">
    <citation type="journal article" date="2011" name="Sci. Signal.">
        <title>System-wide temporal characterization of the proteome and phosphoproteome of human embryonic stem cell differentiation.</title>
        <authorList>
            <person name="Rigbolt K.T."/>
            <person name="Prokhorova T.A."/>
            <person name="Akimov V."/>
            <person name="Henningsen J."/>
            <person name="Johansen P.T."/>
            <person name="Kratchmarova I."/>
            <person name="Kassem M."/>
            <person name="Mann M."/>
            <person name="Olsen J.V."/>
            <person name="Blagoev B."/>
        </authorList>
    </citation>
    <scope>IDENTIFICATION BY MASS SPECTROMETRY [LARGE SCALE ANALYSIS]</scope>
</reference>
<reference key="23">
    <citation type="journal article" date="2012" name="Mol. Cell">
        <title>The ubiquitin ligase Siah1 controls ELL2 stability and formation of super elongation complexes to modulate gene transcription.</title>
        <authorList>
            <person name="Liu M."/>
            <person name="Hsu J."/>
            <person name="Chan C."/>
            <person name="Li Z."/>
            <person name="Zhou Q."/>
        </authorList>
    </citation>
    <scope>INTERACTION WITH ELL2</scope>
</reference>
<reference key="24">
    <citation type="journal article" date="2012" name="Nat. Rev. Mol. Cell Biol.">
        <title>The super elongation complex (SEC) family in transcriptional control.</title>
        <authorList>
            <person name="Luo Z."/>
            <person name="Lin C."/>
            <person name="Shilatifard A."/>
        </authorList>
    </citation>
    <scope>REVIEW ON THE SUPER ELONGATION COMPLEX</scope>
</reference>
<reference key="25">
    <citation type="journal article" date="2013" name="J. Proteome Res.">
        <title>Toward a comprehensive characterization of a human cancer cell phosphoproteome.</title>
        <authorList>
            <person name="Zhou H."/>
            <person name="Di Palma S."/>
            <person name="Preisinger C."/>
            <person name="Peng M."/>
            <person name="Polat A.N."/>
            <person name="Heck A.J."/>
            <person name="Mohammed S."/>
        </authorList>
    </citation>
    <scope>PHOSPHORYLATION [LARGE SCALE ANALYSIS] AT SER-120; SER-212; SER-487; THR-674; SER-680; SER-703; SER-706; SER-814; SER-836; SER-1043 AND SER-1058</scope>
    <scope>IDENTIFICATION BY MASS SPECTROMETRY [LARGE SCALE ANALYSIS]</scope>
    <source>
        <tissue>Cervix carcinoma</tissue>
        <tissue>Erythroleukemia</tissue>
    </source>
</reference>
<reference key="26">
    <citation type="journal article" date="2013" name="Proc. Natl. Acad. Sci. U.S.A.">
        <title>HIV-1 Tat recruits transcription elongation factors dispersed along a flexible AFF4 scaffold.</title>
        <authorList>
            <person name="Chou S."/>
            <person name="Upton H."/>
            <person name="Bao K."/>
            <person name="Schulze-Gahmen U."/>
            <person name="Samelson A.J."/>
            <person name="He N."/>
            <person name="Nowak A."/>
            <person name="Lu H."/>
            <person name="Krogan N.J."/>
            <person name="Zhou Q."/>
            <person name="Alber T."/>
        </authorList>
    </citation>
    <scope>FUNCTION</scope>
</reference>
<reference key="27">
    <citation type="journal article" date="2014" name="J. Proteomics">
        <title>An enzyme assisted RP-RPLC approach for in-depth analysis of human liver phosphoproteome.</title>
        <authorList>
            <person name="Bian Y."/>
            <person name="Song C."/>
            <person name="Cheng K."/>
            <person name="Dong M."/>
            <person name="Wang F."/>
            <person name="Huang J."/>
            <person name="Sun D."/>
            <person name="Wang L."/>
            <person name="Ye M."/>
            <person name="Zou H."/>
        </authorList>
    </citation>
    <scope>PHOSPHORYLATION [LARGE SCALE ANALYSIS] AT SER-487 AND SER-706</scope>
    <scope>IDENTIFICATION BY MASS SPECTROMETRY [LARGE SCALE ANALYSIS]</scope>
    <source>
        <tissue>Liver</tissue>
    </source>
</reference>
<reference key="28">
    <citation type="journal article" date="2015" name="Nat. Genet.">
        <title>Germline gain-of-function mutations in AFF4 cause a developmental syndrome functionally linking the super elongation complex and cohesin.</title>
        <authorList>
            <person name="Izumi K."/>
            <person name="Nakato R."/>
            <person name="Zhang Z."/>
            <person name="Edmondson A.C."/>
            <person name="Noon S."/>
            <person name="Dulik M.C."/>
            <person name="Rajagopalan R."/>
            <person name="Venditti C.P."/>
            <person name="Gripp K."/>
            <person name="Samanich J."/>
            <person name="Zackai E.H."/>
            <person name="Deardorff M.A."/>
            <person name="Clark D."/>
            <person name="Allen J.L."/>
            <person name="Dorsett D."/>
            <person name="Misulovin Z."/>
            <person name="Komata M."/>
            <person name="Bando M."/>
            <person name="Kaur M."/>
            <person name="Katou Y."/>
            <person name="Shirahige K."/>
            <person name="Krantz I.D."/>
        </authorList>
    </citation>
    <scope>INVOLVEMENT IN CHOPS</scope>
    <scope>VARIANTS CHOPS ALA-254; SER-254 AND TRP-258</scope>
</reference>
<reference key="29">
    <citation type="journal article" date="2017" name="Nat. Struct. Mol. Biol.">
        <title>Site-specific mapping of the human SUMO proteome reveals co-modification with phosphorylation.</title>
        <authorList>
            <person name="Hendriks I.A."/>
            <person name="Lyon D."/>
            <person name="Young C."/>
            <person name="Jensen L.J."/>
            <person name="Vertegaal A.C."/>
            <person name="Nielsen M.L."/>
        </authorList>
    </citation>
    <scope>SUMOYLATION [LARGE SCALE ANALYSIS] AT LYS-583</scope>
    <scope>IDENTIFICATION BY MASS SPECTROMETRY [LARGE SCALE ANALYSIS]</scope>
</reference>
<reference key="30">
    <citation type="journal article" date="2018" name="Cell Rep.">
        <title>Positive Regulation of Transcription by Human ZMYND8 through Its Association with P-TEFb Complex.</title>
        <authorList>
            <person name="Ghosh K."/>
            <person name="Tang M."/>
            <person name="Kumari N."/>
            <person name="Nandy A."/>
            <person name="Basu S."/>
            <person name="Mall D.P."/>
            <person name="Rai K."/>
            <person name="Biswas D."/>
        </authorList>
    </citation>
    <scope>INTERACTION WITH CDK9</scope>
    <scope>IDENTIFICATION BY MASS SPECTROMETRY</scope>
</reference>
<reference key="31">
    <citation type="journal article" date="2024" name="Mol. Cell">
        <title>The phosphatase PP1 sustains global transcription by promoting RNA polymerase II pause release.</title>
        <authorList>
            <person name="Wang Z."/>
            <person name="Song A."/>
            <person name="Tao B."/>
            <person name="Miao M."/>
            <person name="Luo Y.Q."/>
            <person name="Wang J."/>
            <person name="Yin Z."/>
            <person name="Xiao R."/>
            <person name="Zhou X."/>
            <person name="Shang X.Y."/>
            <person name="Hu S."/>
            <person name="Liang K."/>
            <person name="Danko C.G."/>
            <person name="Chen F.X."/>
        </authorList>
    </citation>
    <scope>PHOSPHORYLATION AT SER-549</scope>
    <scope>DEPHOSPHORYLATION AT SER-549</scope>
</reference>
<reference key="32">
    <citation type="journal article" date="2011" name="Nature">
        <title>Exome sequencing identifies frequent mutation of the SWI/SNF complex gene PBRM1 in renal carcinoma.</title>
        <authorList>
            <person name="Varela I."/>
            <person name="Tarpey P."/>
            <person name="Raine K."/>
            <person name="Huang D."/>
            <person name="Ong C.K."/>
            <person name="Stephens P."/>
            <person name="Davies H."/>
            <person name="Jones D."/>
            <person name="Lin M.L."/>
            <person name="Teague J."/>
            <person name="Bignell G."/>
            <person name="Butler A."/>
            <person name="Cho J."/>
            <person name="Dalgliesh G.L."/>
            <person name="Galappaththige D."/>
            <person name="Greenman C."/>
            <person name="Hardy C."/>
            <person name="Jia M."/>
            <person name="Latimer C."/>
            <person name="Lau K.W."/>
            <person name="Marshall J."/>
            <person name="McLaren S."/>
            <person name="Menzies A."/>
            <person name="Mudie L."/>
            <person name="Stebbings L."/>
            <person name="Largaespada D.A."/>
            <person name="Wessels L.F.A."/>
            <person name="Richard S."/>
            <person name="Kahnoski R.J."/>
            <person name="Anema J."/>
            <person name="Tuveson D.A."/>
            <person name="Perez-Mancera P.A."/>
            <person name="Mustonen V."/>
            <person name="Fischer A."/>
            <person name="Adams D.J."/>
            <person name="Rust A."/>
            <person name="Chan-On W."/>
            <person name="Subimerb C."/>
            <person name="Dykema K."/>
            <person name="Furge K."/>
            <person name="Campbell P.J."/>
            <person name="Teh B.T."/>
            <person name="Stratton M.R."/>
            <person name="Futreal P.A."/>
        </authorList>
    </citation>
    <scope>VARIANT THR-757</scope>
</reference>
<organism>
    <name type="scientific">Homo sapiens</name>
    <name type="common">Human</name>
    <dbReference type="NCBI Taxonomy" id="9606"/>
    <lineage>
        <taxon>Eukaryota</taxon>
        <taxon>Metazoa</taxon>
        <taxon>Chordata</taxon>
        <taxon>Craniata</taxon>
        <taxon>Vertebrata</taxon>
        <taxon>Euteleostomi</taxon>
        <taxon>Mammalia</taxon>
        <taxon>Eutheria</taxon>
        <taxon>Euarchontoglires</taxon>
        <taxon>Primates</taxon>
        <taxon>Haplorrhini</taxon>
        <taxon>Catarrhini</taxon>
        <taxon>Hominidae</taxon>
        <taxon>Homo</taxon>
    </lineage>
</organism>
<name>AFF4_HUMAN</name>
<keyword id="KW-0002">3D-structure</keyword>
<keyword id="KW-0007">Acetylation</keyword>
<keyword id="KW-0025">Alternative splicing</keyword>
<keyword id="KW-0160">Chromosomal rearrangement</keyword>
<keyword id="KW-0158">Chromosome</keyword>
<keyword id="KW-0903">Direct protein sequencing</keyword>
<keyword id="KW-0225">Disease variant</keyword>
<keyword id="KW-0242">Dwarfism</keyword>
<keyword id="KW-1017">Isopeptide bond</keyword>
<keyword id="KW-0539">Nucleus</keyword>
<keyword id="KW-0550">Obesity</keyword>
<keyword id="KW-0597">Phosphoprotein</keyword>
<keyword id="KW-1267">Proteomics identification</keyword>
<keyword id="KW-0656">Proto-oncogene</keyword>
<keyword id="KW-1185">Reference proteome</keyword>
<keyword id="KW-0804">Transcription</keyword>
<keyword id="KW-0805">Transcription regulation</keyword>
<keyword id="KW-0832">Ubl conjugation</keyword>